<dbReference type="EMBL" id="M84799">
    <property type="protein sequence ID" value="AAC41557.1"/>
    <property type="molecule type" value="Genomic_DNA"/>
</dbReference>
<dbReference type="PIR" id="D56612">
    <property type="entry name" value="D56612"/>
</dbReference>
<dbReference type="RefSeq" id="XP_059095024.1">
    <property type="nucleotide sequence ID" value="XM_059239041.1"/>
</dbReference>
<dbReference type="RefSeq" id="XP_059095508.1">
    <property type="nucleotide sequence ID" value="XM_059239525.1"/>
</dbReference>
<dbReference type="RefSeq" id="XP_059095517.1">
    <property type="nucleotide sequence ID" value="XM_059239534.1"/>
</dbReference>
<dbReference type="SMR" id="P35069"/>
<dbReference type="EnsemblMetazoa" id="TCAL_12414-PA_mrna">
    <property type="protein sequence ID" value="TRY78827.1"/>
    <property type="gene ID" value="TCAL_12414"/>
</dbReference>
<dbReference type="GeneID" id="131889837"/>
<dbReference type="GeneID" id="131890219"/>
<dbReference type="GeneID" id="131890228"/>
<dbReference type="OMA" id="HILFRHI"/>
<dbReference type="OrthoDB" id="6351868at2759"/>
<dbReference type="GO" id="GO:0000786">
    <property type="term" value="C:nucleosome"/>
    <property type="evidence" value="ECO:0007669"/>
    <property type="project" value="UniProtKB-KW"/>
</dbReference>
<dbReference type="GO" id="GO:0005634">
    <property type="term" value="C:nucleus"/>
    <property type="evidence" value="ECO:0007669"/>
    <property type="project" value="UniProtKB-SubCell"/>
</dbReference>
<dbReference type="GO" id="GO:0003677">
    <property type="term" value="F:DNA binding"/>
    <property type="evidence" value="ECO:0007669"/>
    <property type="project" value="UniProtKB-KW"/>
</dbReference>
<dbReference type="GO" id="GO:0046982">
    <property type="term" value="F:protein heterodimerization activity"/>
    <property type="evidence" value="ECO:0007669"/>
    <property type="project" value="InterPro"/>
</dbReference>
<dbReference type="GO" id="GO:0044877">
    <property type="term" value="F:protein-containing complex binding"/>
    <property type="evidence" value="ECO:0000250"/>
    <property type="project" value="UniProtKB"/>
</dbReference>
<dbReference type="GO" id="GO:0030527">
    <property type="term" value="F:structural constituent of chromatin"/>
    <property type="evidence" value="ECO:0007669"/>
    <property type="project" value="InterPro"/>
</dbReference>
<dbReference type="CDD" id="cd22910">
    <property type="entry name" value="HFD_H2B"/>
    <property type="match status" value="1"/>
</dbReference>
<dbReference type="FunFam" id="1.10.20.10:FF:000016">
    <property type="entry name" value="Histone H2B"/>
    <property type="match status" value="1"/>
</dbReference>
<dbReference type="Gene3D" id="1.10.20.10">
    <property type="entry name" value="Histone, subunit A"/>
    <property type="match status" value="1"/>
</dbReference>
<dbReference type="InterPro" id="IPR009072">
    <property type="entry name" value="Histone-fold"/>
</dbReference>
<dbReference type="InterPro" id="IPR007125">
    <property type="entry name" value="Histone_H2A/H2B/H3"/>
</dbReference>
<dbReference type="InterPro" id="IPR000558">
    <property type="entry name" value="Histone_H2B"/>
</dbReference>
<dbReference type="InterPro" id="IPR055333">
    <property type="entry name" value="HISTONE_H2B_site"/>
</dbReference>
<dbReference type="PANTHER" id="PTHR23428">
    <property type="entry name" value="HISTONE H2B"/>
    <property type="match status" value="1"/>
</dbReference>
<dbReference type="Pfam" id="PF00125">
    <property type="entry name" value="Histone"/>
    <property type="match status" value="1"/>
</dbReference>
<dbReference type="PRINTS" id="PR00621">
    <property type="entry name" value="HISTONEH2B"/>
</dbReference>
<dbReference type="SMART" id="SM00427">
    <property type="entry name" value="H2B"/>
    <property type="match status" value="1"/>
</dbReference>
<dbReference type="SUPFAM" id="SSF47113">
    <property type="entry name" value="Histone-fold"/>
    <property type="match status" value="1"/>
</dbReference>
<dbReference type="PROSITE" id="PS00357">
    <property type="entry name" value="HISTONE_H2B"/>
    <property type="match status" value="1"/>
</dbReference>
<protein>
    <recommendedName>
        <fullName>Histone H2B.3</fullName>
    </recommendedName>
</protein>
<sequence length="123" mass="13638">MPPKVSGKAAKKAGKAQKNISKGDKKKNRKRKESYAIYIYKVLKQVHPDTGISSKAMSIMNSFVNDIFERIASEASRLAHYNKRSTITSREIQTAVRLLLPGELAKHAVSEGTKAVTKYTSSK</sequence>
<keyword id="KW-0158">Chromosome</keyword>
<keyword id="KW-0238">DNA-binding</keyword>
<keyword id="KW-0325">Glycoprotein</keyword>
<keyword id="KW-1017">Isopeptide bond</keyword>
<keyword id="KW-0544">Nucleosome core</keyword>
<keyword id="KW-0539">Nucleus</keyword>
<keyword id="KW-0832">Ubl conjugation</keyword>
<evidence type="ECO:0000250" key="1"/>
<evidence type="ECO:0000256" key="2">
    <source>
        <dbReference type="SAM" id="MobiDB-lite"/>
    </source>
</evidence>
<evidence type="ECO:0000305" key="3"/>
<organism>
    <name type="scientific">Tigriopus californicus</name>
    <name type="common">Marine copepod</name>
    <dbReference type="NCBI Taxonomy" id="6832"/>
    <lineage>
        <taxon>Eukaryota</taxon>
        <taxon>Metazoa</taxon>
        <taxon>Ecdysozoa</taxon>
        <taxon>Arthropoda</taxon>
        <taxon>Crustacea</taxon>
        <taxon>Multicrustacea</taxon>
        <taxon>Hexanauplia</taxon>
        <taxon>Copepoda</taxon>
        <taxon>Harpacticoida</taxon>
        <taxon>Harpacticidae</taxon>
        <taxon>Tigriopus</taxon>
    </lineage>
</organism>
<feature type="initiator methionine" description="Removed" evidence="1">
    <location>
        <position position="1"/>
    </location>
</feature>
<feature type="chain" id="PRO_0000071880" description="Histone H2B.3">
    <location>
        <begin position="2"/>
        <end position="123"/>
    </location>
</feature>
<feature type="region of interest" description="Disordered" evidence="2">
    <location>
        <begin position="1"/>
        <end position="30"/>
    </location>
</feature>
<feature type="glycosylation site" description="O-linked (GlcNAc) serine" evidence="1">
    <location>
        <position position="110"/>
    </location>
</feature>
<feature type="cross-link" description="Glycyl lysine isopeptide (Lys-Gly) (interchain with G-Cter in ubiquitin)" evidence="1">
    <location>
        <position position="118"/>
    </location>
</feature>
<accession>P35069</accession>
<name>H2B3_TIGCA</name>
<comment type="function">
    <text>Core component of nucleosome. Nucleosomes wrap and compact DNA into chromatin, limiting DNA accessibility to the cellular machineries which require DNA as a template. Histones thereby play a central role in transcription regulation, DNA repair, DNA replication and chromosomal stability. DNA accessibility is regulated via a complex set of post-translational modifications of histones, also called histone code, and nucleosome remodeling.</text>
</comment>
<comment type="subunit">
    <text>The nucleosome is a histone octamer containing two molecules each of H2A, H2B, H3 and H4 assembled in one H3-H4 heterotetramer and two H2A-H2B heterodimers. The octamer wraps approximately 147 bp of DNA.</text>
</comment>
<comment type="subcellular location">
    <subcellularLocation>
        <location>Nucleus</location>
    </subcellularLocation>
    <subcellularLocation>
        <location>Chromosome</location>
    </subcellularLocation>
</comment>
<comment type="PTM">
    <text evidence="1">Monoubiquitination of Lys-118 gives a specific tag for epigenetic transcriptional activation and is also prerequisite for histone H3 'Lys-4' and 'Lys-79' methylation.</text>
</comment>
<comment type="PTM">
    <text evidence="1">GlcNAcylation at Ser-110 promotes monoubiquitination of Lys-118. It fluctuates in response to extracellular glucose, and associates with transcribed genes (By similarity).</text>
</comment>
<comment type="similarity">
    <text evidence="3">Belongs to the histone H2B family.</text>
</comment>
<proteinExistence type="inferred from homology"/>
<reference key="1">
    <citation type="journal article" date="1992" name="DNA Seq.">
        <title>Closely linked H2B genes in the marine copepod, Tigriopus californicus indicate a recent gene duplication or gene conversion event.</title>
        <authorList>
            <person name="Brown D."/>
            <person name="Cook A."/>
            <person name="Wagner M."/>
            <person name="Wells D."/>
        </authorList>
    </citation>
    <scope>NUCLEOTIDE SEQUENCE [GENOMIC DNA]</scope>
</reference>